<dbReference type="EC" id="2.1.1.45" evidence="1"/>
<dbReference type="EMBL" id="AL157959">
    <property type="protein sequence ID" value="CAM09075.1"/>
    <property type="molecule type" value="Genomic_DNA"/>
</dbReference>
<dbReference type="PIR" id="A81825">
    <property type="entry name" value="A81825"/>
</dbReference>
<dbReference type="RefSeq" id="WP_002246380.1">
    <property type="nucleotide sequence ID" value="NC_003116.1"/>
</dbReference>
<dbReference type="SMR" id="Q9JT57"/>
<dbReference type="EnsemblBacteria" id="CAM09075">
    <property type="protein sequence ID" value="CAM09075"/>
    <property type="gene ID" value="NMA1963"/>
</dbReference>
<dbReference type="KEGG" id="nma:NMA1963"/>
<dbReference type="HOGENOM" id="CLU_021669_0_0_4"/>
<dbReference type="UniPathway" id="UPA00575"/>
<dbReference type="Proteomes" id="UP000000626">
    <property type="component" value="Chromosome"/>
</dbReference>
<dbReference type="GO" id="GO:0005829">
    <property type="term" value="C:cytosol"/>
    <property type="evidence" value="ECO:0007669"/>
    <property type="project" value="TreeGrafter"/>
</dbReference>
<dbReference type="GO" id="GO:0004799">
    <property type="term" value="F:thymidylate synthase activity"/>
    <property type="evidence" value="ECO:0007669"/>
    <property type="project" value="UniProtKB-UniRule"/>
</dbReference>
<dbReference type="GO" id="GO:0006231">
    <property type="term" value="P:dTMP biosynthetic process"/>
    <property type="evidence" value="ECO:0007669"/>
    <property type="project" value="UniProtKB-UniRule"/>
</dbReference>
<dbReference type="GO" id="GO:0006235">
    <property type="term" value="P:dTTP biosynthetic process"/>
    <property type="evidence" value="ECO:0007669"/>
    <property type="project" value="UniProtKB-UniRule"/>
</dbReference>
<dbReference type="GO" id="GO:0032259">
    <property type="term" value="P:methylation"/>
    <property type="evidence" value="ECO:0007669"/>
    <property type="project" value="UniProtKB-KW"/>
</dbReference>
<dbReference type="CDD" id="cd00351">
    <property type="entry name" value="TS_Pyrimidine_HMase"/>
    <property type="match status" value="1"/>
</dbReference>
<dbReference type="FunFam" id="3.30.572.10:FF:000001">
    <property type="entry name" value="Thymidylate synthase"/>
    <property type="match status" value="1"/>
</dbReference>
<dbReference type="Gene3D" id="3.30.572.10">
    <property type="entry name" value="Thymidylate synthase/dCMP hydroxymethylase domain"/>
    <property type="match status" value="1"/>
</dbReference>
<dbReference type="HAMAP" id="MF_00008">
    <property type="entry name" value="Thymidy_synth_bact"/>
    <property type="match status" value="1"/>
</dbReference>
<dbReference type="InterPro" id="IPR045097">
    <property type="entry name" value="Thymidate_synth/dCMP_Mease"/>
</dbReference>
<dbReference type="InterPro" id="IPR023451">
    <property type="entry name" value="Thymidate_synth/dCMP_Mease_dom"/>
</dbReference>
<dbReference type="InterPro" id="IPR036926">
    <property type="entry name" value="Thymidate_synth/dCMP_Mease_sf"/>
</dbReference>
<dbReference type="InterPro" id="IPR000398">
    <property type="entry name" value="Thymidylate_synthase"/>
</dbReference>
<dbReference type="InterPro" id="IPR020940">
    <property type="entry name" value="Thymidylate_synthase_AS"/>
</dbReference>
<dbReference type="NCBIfam" id="NF002497">
    <property type="entry name" value="PRK01827.1-3"/>
    <property type="match status" value="1"/>
</dbReference>
<dbReference type="NCBIfam" id="NF002499">
    <property type="entry name" value="PRK01827.1-5"/>
    <property type="match status" value="1"/>
</dbReference>
<dbReference type="NCBIfam" id="TIGR03284">
    <property type="entry name" value="thym_sym"/>
    <property type="match status" value="2"/>
</dbReference>
<dbReference type="PANTHER" id="PTHR11548:SF9">
    <property type="entry name" value="THYMIDYLATE SYNTHASE"/>
    <property type="match status" value="1"/>
</dbReference>
<dbReference type="PANTHER" id="PTHR11548">
    <property type="entry name" value="THYMIDYLATE SYNTHASE 1"/>
    <property type="match status" value="1"/>
</dbReference>
<dbReference type="Pfam" id="PF00303">
    <property type="entry name" value="Thymidylat_synt"/>
    <property type="match status" value="1"/>
</dbReference>
<dbReference type="PRINTS" id="PR00108">
    <property type="entry name" value="THYMDSNTHASE"/>
</dbReference>
<dbReference type="SUPFAM" id="SSF55831">
    <property type="entry name" value="Thymidylate synthase/dCMP hydroxymethylase"/>
    <property type="match status" value="1"/>
</dbReference>
<dbReference type="PROSITE" id="PS00091">
    <property type="entry name" value="THYMIDYLATE_SYNTHASE"/>
    <property type="match status" value="1"/>
</dbReference>
<organism>
    <name type="scientific">Neisseria meningitidis serogroup A / serotype 4A (strain DSM 15465 / Z2491)</name>
    <dbReference type="NCBI Taxonomy" id="122587"/>
    <lineage>
        <taxon>Bacteria</taxon>
        <taxon>Pseudomonadati</taxon>
        <taxon>Pseudomonadota</taxon>
        <taxon>Betaproteobacteria</taxon>
        <taxon>Neisseriales</taxon>
        <taxon>Neisseriaceae</taxon>
        <taxon>Neisseria</taxon>
    </lineage>
</organism>
<evidence type="ECO:0000255" key="1">
    <source>
        <dbReference type="HAMAP-Rule" id="MF_00008"/>
    </source>
</evidence>
<reference key="1">
    <citation type="journal article" date="2000" name="Nature">
        <title>Complete DNA sequence of a serogroup A strain of Neisseria meningitidis Z2491.</title>
        <authorList>
            <person name="Parkhill J."/>
            <person name="Achtman M."/>
            <person name="James K.D."/>
            <person name="Bentley S.D."/>
            <person name="Churcher C.M."/>
            <person name="Klee S.R."/>
            <person name="Morelli G."/>
            <person name="Basham D."/>
            <person name="Brown D."/>
            <person name="Chillingworth T."/>
            <person name="Davies R.M."/>
            <person name="Davis P."/>
            <person name="Devlin K."/>
            <person name="Feltwell T."/>
            <person name="Hamlin N."/>
            <person name="Holroyd S."/>
            <person name="Jagels K."/>
            <person name="Leather S."/>
            <person name="Moule S."/>
            <person name="Mungall K.L."/>
            <person name="Quail M.A."/>
            <person name="Rajandream M.A."/>
            <person name="Rutherford K.M."/>
            <person name="Simmonds M."/>
            <person name="Skelton J."/>
            <person name="Whitehead S."/>
            <person name="Spratt B.G."/>
            <person name="Barrell B.G."/>
        </authorList>
    </citation>
    <scope>NUCLEOTIDE SEQUENCE [LARGE SCALE GENOMIC DNA]</scope>
    <source>
        <strain>DSM 15465 / Z2491</strain>
    </source>
</reference>
<protein>
    <recommendedName>
        <fullName evidence="1">Thymidylate synthase</fullName>
        <shortName evidence="1">TS</shortName>
        <shortName evidence="1">TSase</shortName>
        <ecNumber evidence="1">2.1.1.45</ecNumber>
    </recommendedName>
</protein>
<keyword id="KW-0963">Cytoplasm</keyword>
<keyword id="KW-0489">Methyltransferase</keyword>
<keyword id="KW-0545">Nucleotide biosynthesis</keyword>
<keyword id="KW-0808">Transferase</keyword>
<sequence length="264" mass="30261">MKAYLDLMRHVLDNGTDKSDRTGTGTRSVFGYQMRFDLGKGFPLLTTKKLHLRSIIHELLWFLKGDTNIKYLKDNNVSIWDEWADENGDLGPVYGYQWRNWPAPDGRHIDQIANVLEQIKKNPDSRRLIVSAWNPALVDEMALPPCHALFQFYVADGKLSCQLYQRSADIFLGVPFNIASYALLTMMMAQVCGLEAGEFVHTFGDAHLYRNHFEQAALQLEREPRALPVMKINPEVKDLFAFKFEDFELEGYDPHPHIKAAVSV</sequence>
<name>TYSY_NEIMA</name>
<accession>Q9JT57</accession>
<accession>A1ITG1</accession>
<feature type="chain" id="PRO_0000140993" description="Thymidylate synthase">
    <location>
        <begin position="1"/>
        <end position="264"/>
    </location>
</feature>
<feature type="active site" description="Nucleophile" evidence="1">
    <location>
        <position position="146"/>
    </location>
</feature>
<feature type="binding site" description="in other chain" evidence="1">
    <location>
        <position position="21"/>
    </location>
    <ligand>
        <name>dUMP</name>
        <dbReference type="ChEBI" id="CHEBI:246422"/>
        <note>ligand shared between dimeric partners</note>
    </ligand>
</feature>
<feature type="binding site" evidence="1">
    <location>
        <position position="51"/>
    </location>
    <ligand>
        <name>(6R)-5,10-methylene-5,6,7,8-tetrahydrofolate</name>
        <dbReference type="ChEBI" id="CHEBI:15636"/>
    </ligand>
</feature>
<feature type="binding site" evidence="1">
    <location>
        <begin position="126"/>
        <end position="127"/>
    </location>
    <ligand>
        <name>dUMP</name>
        <dbReference type="ChEBI" id="CHEBI:246422"/>
        <note>ligand shared between dimeric partners</note>
    </ligand>
</feature>
<feature type="binding site" description="in other chain" evidence="1">
    <location>
        <begin position="166"/>
        <end position="169"/>
    </location>
    <ligand>
        <name>dUMP</name>
        <dbReference type="ChEBI" id="CHEBI:246422"/>
        <note>ligand shared between dimeric partners</note>
    </ligand>
</feature>
<feature type="binding site" evidence="1">
    <location>
        <position position="169"/>
    </location>
    <ligand>
        <name>(6R)-5,10-methylene-5,6,7,8-tetrahydrofolate</name>
        <dbReference type="ChEBI" id="CHEBI:15636"/>
    </ligand>
</feature>
<feature type="binding site" description="in other chain" evidence="1">
    <location>
        <position position="177"/>
    </location>
    <ligand>
        <name>dUMP</name>
        <dbReference type="ChEBI" id="CHEBI:246422"/>
        <note>ligand shared between dimeric partners</note>
    </ligand>
</feature>
<feature type="binding site" description="in other chain" evidence="1">
    <location>
        <begin position="207"/>
        <end position="209"/>
    </location>
    <ligand>
        <name>dUMP</name>
        <dbReference type="ChEBI" id="CHEBI:246422"/>
        <note>ligand shared between dimeric partners</note>
    </ligand>
</feature>
<feature type="binding site" evidence="1">
    <location>
        <position position="263"/>
    </location>
    <ligand>
        <name>(6R)-5,10-methylene-5,6,7,8-tetrahydrofolate</name>
        <dbReference type="ChEBI" id="CHEBI:15636"/>
    </ligand>
</feature>
<proteinExistence type="inferred from homology"/>
<comment type="function">
    <text evidence="1">Catalyzes the reductive methylation of 2'-deoxyuridine-5'-monophosphate (dUMP) to 2'-deoxythymidine-5'-monophosphate (dTMP) while utilizing 5,10-methylenetetrahydrofolate (mTHF) as the methyl donor and reductant in the reaction, yielding dihydrofolate (DHF) as a by-product. This enzymatic reaction provides an intracellular de novo source of dTMP, an essential precursor for DNA biosynthesis.</text>
</comment>
<comment type="catalytic activity">
    <reaction evidence="1">
        <text>dUMP + (6R)-5,10-methylene-5,6,7,8-tetrahydrofolate = 7,8-dihydrofolate + dTMP</text>
        <dbReference type="Rhea" id="RHEA:12104"/>
        <dbReference type="ChEBI" id="CHEBI:15636"/>
        <dbReference type="ChEBI" id="CHEBI:57451"/>
        <dbReference type="ChEBI" id="CHEBI:63528"/>
        <dbReference type="ChEBI" id="CHEBI:246422"/>
        <dbReference type="EC" id="2.1.1.45"/>
    </reaction>
</comment>
<comment type="pathway">
    <text evidence="1">Pyrimidine metabolism; dTTP biosynthesis.</text>
</comment>
<comment type="subunit">
    <text evidence="1">Homodimer.</text>
</comment>
<comment type="subcellular location">
    <subcellularLocation>
        <location evidence="1">Cytoplasm</location>
    </subcellularLocation>
</comment>
<comment type="similarity">
    <text evidence="1">Belongs to the thymidylate synthase family. Bacterial-type ThyA subfamily.</text>
</comment>
<gene>
    <name evidence="1" type="primary">thyA</name>
    <name type="ordered locus">NMA1963</name>
</gene>